<organism>
    <name type="scientific">Leptospira interrogans serogroup Icterohaemorrhagiae serovar copenhageni (strain Fiocruz L1-130)</name>
    <dbReference type="NCBI Taxonomy" id="267671"/>
    <lineage>
        <taxon>Bacteria</taxon>
        <taxon>Pseudomonadati</taxon>
        <taxon>Spirochaetota</taxon>
        <taxon>Spirochaetia</taxon>
        <taxon>Leptospirales</taxon>
        <taxon>Leptospiraceae</taxon>
        <taxon>Leptospira</taxon>
    </lineage>
</organism>
<keyword id="KW-0028">Amino-acid biosynthesis</keyword>
<keyword id="KW-0220">Diaminopimelate biosynthesis</keyword>
<keyword id="KW-0457">Lysine biosynthesis</keyword>
<keyword id="KW-0486">Methionine biosynthesis</keyword>
<keyword id="KW-0521">NADP</keyword>
<keyword id="KW-0560">Oxidoreductase</keyword>
<keyword id="KW-0791">Threonine biosynthesis</keyword>
<protein>
    <recommendedName>
        <fullName evidence="1">Aspartate-semialdehyde dehydrogenase</fullName>
        <shortName evidence="1">ASA dehydrogenase</shortName>
        <shortName evidence="1">ASADH</shortName>
        <ecNumber evidence="1">1.2.1.11</ecNumber>
    </recommendedName>
    <alternativeName>
        <fullName evidence="1">Aspartate-beta-semialdehyde dehydrogenase</fullName>
    </alternativeName>
</protein>
<reference key="1">
    <citation type="journal article" date="2004" name="J. Bacteriol.">
        <title>Comparative genomics of two Leptospira interrogans serovars reveals novel insights into physiology and pathogenesis.</title>
        <authorList>
            <person name="Nascimento A.L.T.O."/>
            <person name="Ko A.I."/>
            <person name="Martins E.A.L."/>
            <person name="Monteiro-Vitorello C.B."/>
            <person name="Ho P.L."/>
            <person name="Haake D.A."/>
            <person name="Verjovski-Almeida S."/>
            <person name="Hartskeerl R.A."/>
            <person name="Marques M.V."/>
            <person name="Oliveira M.C."/>
            <person name="Menck C.F.M."/>
            <person name="Leite L.C.C."/>
            <person name="Carrer H."/>
            <person name="Coutinho L.L."/>
            <person name="Degrave W.M."/>
            <person name="Dellagostin O.A."/>
            <person name="El-Dorry H."/>
            <person name="Ferro E.S."/>
            <person name="Ferro M.I.T."/>
            <person name="Furlan L.R."/>
            <person name="Gamberini M."/>
            <person name="Giglioti E.A."/>
            <person name="Goes-Neto A."/>
            <person name="Goldman G.H."/>
            <person name="Goldman M.H.S."/>
            <person name="Harakava R."/>
            <person name="Jeronimo S.M.B."/>
            <person name="Junqueira-de-Azevedo I.L.M."/>
            <person name="Kimura E.T."/>
            <person name="Kuramae E.E."/>
            <person name="Lemos E.G.M."/>
            <person name="Lemos M.V.F."/>
            <person name="Marino C.L."/>
            <person name="Nunes L.R."/>
            <person name="de Oliveira R.C."/>
            <person name="Pereira G.G."/>
            <person name="Reis M.S."/>
            <person name="Schriefer A."/>
            <person name="Siqueira W.J."/>
            <person name="Sommer P."/>
            <person name="Tsai S.M."/>
            <person name="Simpson A.J.G."/>
            <person name="Ferro J.A."/>
            <person name="Camargo L.E.A."/>
            <person name="Kitajima J.P."/>
            <person name="Setubal J.C."/>
            <person name="Van Sluys M.A."/>
        </authorList>
    </citation>
    <scope>NUCLEOTIDE SEQUENCE [LARGE SCALE GENOMIC DNA]</scope>
    <source>
        <strain>Fiocruz L1-130</strain>
    </source>
</reference>
<name>DHAS_LEPIC</name>
<sequence>MSRVKVAVLGATGSVGQRFIQLLDHHPFFEITHLCASENSAGKTYGEVMKTRWKISSDIPAYAKNLVITTPDPAKTKDVVLAFSGLDSNVAGEVEKNYANAGIHIISNSKNHRMDPTVPILSAEVNSSHLEVLTSQKTKGKIITNSNCTIMGVTISLKPLLDRFGIESVMLFSMQAISGAGYPGVPTMDILGNVIPHIGGEEEKAEIEPLKCLGKVENGKILHADFSISAHCNRVPVFDGHTVCVSVKFKKKPSREEIISSWKDFSGEPQTLGLPLAPNPVILFREEEDRPQPRLDLDTGKGMTTVIGRLRPDPILDWKYVVLSHNTIRGAAGAALLNAELLYKKKFLG</sequence>
<feature type="chain" id="PRO_0000141379" description="Aspartate-semialdehyde dehydrogenase">
    <location>
        <begin position="1"/>
        <end position="349"/>
    </location>
</feature>
<feature type="active site" description="Acyl-thioester intermediate" evidence="1">
    <location>
        <position position="148"/>
    </location>
</feature>
<feature type="active site" description="Proton acceptor" evidence="1">
    <location>
        <position position="241"/>
    </location>
</feature>
<feature type="binding site" evidence="1">
    <location>
        <begin position="12"/>
        <end position="15"/>
    </location>
    <ligand>
        <name>NADP(+)</name>
        <dbReference type="ChEBI" id="CHEBI:58349"/>
    </ligand>
</feature>
<feature type="binding site" evidence="1">
    <location>
        <begin position="39"/>
        <end position="40"/>
    </location>
    <ligand>
        <name>NADP(+)</name>
        <dbReference type="ChEBI" id="CHEBI:58349"/>
    </ligand>
</feature>
<feature type="binding site" evidence="1">
    <location>
        <position position="113"/>
    </location>
    <ligand>
        <name>phosphate</name>
        <dbReference type="ChEBI" id="CHEBI:43474"/>
    </ligand>
</feature>
<feature type="binding site" evidence="1">
    <location>
        <position position="175"/>
    </location>
    <ligand>
        <name>substrate</name>
    </ligand>
</feature>
<feature type="binding site" evidence="1">
    <location>
        <begin position="178"/>
        <end position="179"/>
    </location>
    <ligand>
        <name>NADP(+)</name>
        <dbReference type="ChEBI" id="CHEBI:58349"/>
    </ligand>
</feature>
<feature type="binding site" evidence="1">
    <location>
        <position position="201"/>
    </location>
    <ligand>
        <name>substrate</name>
    </ligand>
</feature>
<feature type="binding site" evidence="1">
    <location>
        <position position="204"/>
    </location>
    <ligand>
        <name>phosphate</name>
        <dbReference type="ChEBI" id="CHEBI:43474"/>
    </ligand>
</feature>
<feature type="binding site" evidence="1">
    <location>
        <position position="234"/>
    </location>
    <ligand>
        <name>substrate</name>
    </ligand>
</feature>
<feature type="binding site" evidence="1">
    <location>
        <begin position="326"/>
        <end position="327"/>
    </location>
    <ligand>
        <name>NADP(+)</name>
        <dbReference type="ChEBI" id="CHEBI:58349"/>
    </ligand>
</feature>
<gene>
    <name evidence="1" type="primary">asd</name>
    <name type="ordered locus">LIC_20266</name>
</gene>
<accession>Q75FC8</accession>
<proteinExistence type="inferred from homology"/>
<comment type="function">
    <text evidence="1">Catalyzes the NADPH-dependent formation of L-aspartate-semialdehyde (L-ASA) by the reductive dephosphorylation of L-aspartyl-4-phosphate.</text>
</comment>
<comment type="catalytic activity">
    <reaction evidence="1">
        <text>L-aspartate 4-semialdehyde + phosphate + NADP(+) = 4-phospho-L-aspartate + NADPH + H(+)</text>
        <dbReference type="Rhea" id="RHEA:24284"/>
        <dbReference type="ChEBI" id="CHEBI:15378"/>
        <dbReference type="ChEBI" id="CHEBI:43474"/>
        <dbReference type="ChEBI" id="CHEBI:57535"/>
        <dbReference type="ChEBI" id="CHEBI:57783"/>
        <dbReference type="ChEBI" id="CHEBI:58349"/>
        <dbReference type="ChEBI" id="CHEBI:537519"/>
        <dbReference type="EC" id="1.2.1.11"/>
    </reaction>
</comment>
<comment type="pathway">
    <text evidence="1">Amino-acid biosynthesis; L-lysine biosynthesis via DAP pathway; (S)-tetrahydrodipicolinate from L-aspartate: step 2/4.</text>
</comment>
<comment type="pathway">
    <text evidence="1">Amino-acid biosynthesis; L-methionine biosynthesis via de novo pathway; L-homoserine from L-aspartate: step 2/3.</text>
</comment>
<comment type="pathway">
    <text evidence="1">Amino-acid biosynthesis; L-threonine biosynthesis; L-threonine from L-aspartate: step 2/5.</text>
</comment>
<comment type="subunit">
    <text evidence="1">Homodimer.</text>
</comment>
<comment type="similarity">
    <text evidence="1">Belongs to the aspartate-semialdehyde dehydrogenase family.</text>
</comment>
<dbReference type="EC" id="1.2.1.11" evidence="1"/>
<dbReference type="EMBL" id="AE016824">
    <property type="protein sequence ID" value="AAS72287.1"/>
    <property type="molecule type" value="Genomic_DNA"/>
</dbReference>
<dbReference type="RefSeq" id="WP_000092003.1">
    <property type="nucleotide sequence ID" value="NC_005824.1"/>
</dbReference>
<dbReference type="SMR" id="Q75FC8"/>
<dbReference type="GeneID" id="61141468"/>
<dbReference type="KEGG" id="lic:LIC_20266"/>
<dbReference type="HOGENOM" id="CLU_049966_1_0_12"/>
<dbReference type="UniPathway" id="UPA00034">
    <property type="reaction ID" value="UER00016"/>
</dbReference>
<dbReference type="UniPathway" id="UPA00050">
    <property type="reaction ID" value="UER00463"/>
</dbReference>
<dbReference type="UniPathway" id="UPA00051">
    <property type="reaction ID" value="UER00464"/>
</dbReference>
<dbReference type="Proteomes" id="UP000007037">
    <property type="component" value="Chromosome II"/>
</dbReference>
<dbReference type="GO" id="GO:0004073">
    <property type="term" value="F:aspartate-semialdehyde dehydrogenase activity"/>
    <property type="evidence" value="ECO:0007669"/>
    <property type="project" value="UniProtKB-UniRule"/>
</dbReference>
<dbReference type="GO" id="GO:0051287">
    <property type="term" value="F:NAD binding"/>
    <property type="evidence" value="ECO:0007669"/>
    <property type="project" value="InterPro"/>
</dbReference>
<dbReference type="GO" id="GO:0050661">
    <property type="term" value="F:NADP binding"/>
    <property type="evidence" value="ECO:0007669"/>
    <property type="project" value="UniProtKB-UniRule"/>
</dbReference>
<dbReference type="GO" id="GO:0046983">
    <property type="term" value="F:protein dimerization activity"/>
    <property type="evidence" value="ECO:0007669"/>
    <property type="project" value="InterPro"/>
</dbReference>
<dbReference type="GO" id="GO:0071266">
    <property type="term" value="P:'de novo' L-methionine biosynthetic process"/>
    <property type="evidence" value="ECO:0007669"/>
    <property type="project" value="UniProtKB-UniRule"/>
</dbReference>
<dbReference type="GO" id="GO:0019877">
    <property type="term" value="P:diaminopimelate biosynthetic process"/>
    <property type="evidence" value="ECO:0007669"/>
    <property type="project" value="UniProtKB-UniRule"/>
</dbReference>
<dbReference type="GO" id="GO:0009089">
    <property type="term" value="P:lysine biosynthetic process via diaminopimelate"/>
    <property type="evidence" value="ECO:0007669"/>
    <property type="project" value="UniProtKB-UniRule"/>
</dbReference>
<dbReference type="GO" id="GO:0009088">
    <property type="term" value="P:threonine biosynthetic process"/>
    <property type="evidence" value="ECO:0007669"/>
    <property type="project" value="UniProtKB-UniRule"/>
</dbReference>
<dbReference type="CDD" id="cd18130">
    <property type="entry name" value="ASADH_C_arch_fung_like"/>
    <property type="match status" value="1"/>
</dbReference>
<dbReference type="CDD" id="cd02315">
    <property type="entry name" value="ScASADH_like_N"/>
    <property type="match status" value="1"/>
</dbReference>
<dbReference type="FunFam" id="3.40.50.720:FF:000411">
    <property type="entry name" value="Aspartate-semialdehyde dehydrogenase"/>
    <property type="match status" value="1"/>
</dbReference>
<dbReference type="FunFam" id="3.30.360.10:FF:000016">
    <property type="entry name" value="Probable aspartate-semialdehyde dehydrogenase"/>
    <property type="match status" value="1"/>
</dbReference>
<dbReference type="Gene3D" id="3.30.360.10">
    <property type="entry name" value="Dihydrodipicolinate Reductase, domain 2"/>
    <property type="match status" value="1"/>
</dbReference>
<dbReference type="Gene3D" id="3.40.50.720">
    <property type="entry name" value="NAD(P)-binding Rossmann-like Domain"/>
    <property type="match status" value="1"/>
</dbReference>
<dbReference type="HAMAP" id="MF_02121">
    <property type="entry name" value="ASADH"/>
    <property type="match status" value="1"/>
</dbReference>
<dbReference type="InterPro" id="IPR051823">
    <property type="entry name" value="ASADH-related"/>
</dbReference>
<dbReference type="InterPro" id="IPR000319">
    <property type="entry name" value="Asp-semialdehyde_DH_CS"/>
</dbReference>
<dbReference type="InterPro" id="IPR005676">
    <property type="entry name" value="Asp_semi-ald_DH_pep-lack"/>
</dbReference>
<dbReference type="InterPro" id="IPR012080">
    <property type="entry name" value="Asp_semialdehyde_DH"/>
</dbReference>
<dbReference type="InterPro" id="IPR036291">
    <property type="entry name" value="NAD(P)-bd_dom_sf"/>
</dbReference>
<dbReference type="InterPro" id="IPR000534">
    <property type="entry name" value="Semialdehyde_DH_NAD-bd"/>
</dbReference>
<dbReference type="InterPro" id="IPR012280">
    <property type="entry name" value="Semialdhyde_DH_dimer_dom"/>
</dbReference>
<dbReference type="NCBIfam" id="TIGR00978">
    <property type="entry name" value="asd_EA"/>
    <property type="match status" value="1"/>
</dbReference>
<dbReference type="NCBIfam" id="NF006416">
    <property type="entry name" value="PRK08664.1"/>
    <property type="match status" value="1"/>
</dbReference>
<dbReference type="PANTHER" id="PTHR46718">
    <property type="entry name" value="ASPARTATE-SEMIALDEHYDE DEHYDROGENASE"/>
    <property type="match status" value="1"/>
</dbReference>
<dbReference type="PANTHER" id="PTHR46718:SF1">
    <property type="entry name" value="ASPARTATE-SEMIALDEHYDE DEHYDROGENASE"/>
    <property type="match status" value="1"/>
</dbReference>
<dbReference type="Pfam" id="PF01118">
    <property type="entry name" value="Semialdhyde_dh"/>
    <property type="match status" value="1"/>
</dbReference>
<dbReference type="Pfam" id="PF02774">
    <property type="entry name" value="Semialdhyde_dhC"/>
    <property type="match status" value="1"/>
</dbReference>
<dbReference type="PIRSF" id="PIRSF000148">
    <property type="entry name" value="ASA_dh"/>
    <property type="match status" value="1"/>
</dbReference>
<dbReference type="SMART" id="SM00859">
    <property type="entry name" value="Semialdhyde_dh"/>
    <property type="match status" value="1"/>
</dbReference>
<dbReference type="SUPFAM" id="SSF55347">
    <property type="entry name" value="Glyceraldehyde-3-phosphate dehydrogenase-like, C-terminal domain"/>
    <property type="match status" value="1"/>
</dbReference>
<dbReference type="SUPFAM" id="SSF51735">
    <property type="entry name" value="NAD(P)-binding Rossmann-fold domains"/>
    <property type="match status" value="1"/>
</dbReference>
<dbReference type="PROSITE" id="PS01103">
    <property type="entry name" value="ASD"/>
    <property type="match status" value="1"/>
</dbReference>
<evidence type="ECO:0000255" key="1">
    <source>
        <dbReference type="HAMAP-Rule" id="MF_02121"/>
    </source>
</evidence>